<organism>
    <name type="scientific">Gloeobacter violaceus (strain ATCC 29082 / PCC 7421)</name>
    <dbReference type="NCBI Taxonomy" id="251221"/>
    <lineage>
        <taxon>Bacteria</taxon>
        <taxon>Bacillati</taxon>
        <taxon>Cyanobacteriota</taxon>
        <taxon>Cyanophyceae</taxon>
        <taxon>Gloeobacterales</taxon>
        <taxon>Gloeobacteraceae</taxon>
        <taxon>Gloeobacter</taxon>
    </lineage>
</organism>
<protein>
    <recommendedName>
        <fullName evidence="2">Translation initiation factor IF-2</fullName>
    </recommendedName>
</protein>
<name>IF2_GLOVI</name>
<sequence length="925" mass="98910">MTNANMQGKIRIYDLARDLGRDNRDVMAVCQRLGIAHKTHSSTISEQEADSIREAFQRGLPPGGRKKAKIQQQGAAAANKQQILEVRRPPVGYQPPVRTEVSQILVSTVTPAVPTEAQPLPIPTLPELPVPEQVAEQAAAPSVQEAVEPIAVSPVTSPLPIDAADVEADNYTADEDSMPISIAQTVVEAPAAPTSEAAPPEPEPTPLPAPAAEAPQPVRPPAPPAPAKPTPAPAPAPRPTAEQPSEPRRPQPPAQPPSRPEKRGGPLIAPNRGGLQPTRPVPAQPAPQTPTRSGSGIAKKGAITKAGSGSGGGRPGGPMRRRDEREAAVVDEQPKILLLSGNISVQDLAQRMHVPTTEIIKTLFMKSVMVNINQTLDQATAELVARELGYEVQAETAVAQATKTEMLDVGDIESLEVRPPVVTIMGHVDHGKTSLLDAIRSARVAEGEAGGITQHIGAYQIEVPTEAGPRKLVFLDTPGHEAFTAMRARGAKVTDITVLVVAADDGVKPQTIEAISHAKAAGVPILVAINKVDKPDANPERVKQELTEYDLVPEEWGGKTVMVPVSAKQKLNLDLLLENLLLVADYELELMANPNRQAKGTIIEANLDKARGPVATALVQNGTLHVGDIIVVGSIFGKVRALYDDRGNRVDAAPPSMPVEVLGLTDVPQAGDEFEVYSDEREARRIADERTSKARENRLQQQMASRRVSLGAFSAQAQEGELKELALIIRADVQGSVEAIRASLEKLPQDKVQLRVLQAAAGEVSETDIDLAAASNAVILSFSTTLASGARQAAEQAGVDVREYDVIYKLLEDIQLAMEGLLDPELVEEALGGAEVRQVFPVGKGQVAGCYVKEGKLLRNAQMRVRRGKEVVFEGHVDSLKRFKEDAKEVATGFECGVGSDKFASWQPGDLIECFRMVTQKRTLN</sequence>
<comment type="function">
    <text evidence="2">One of the essential components for the initiation of protein synthesis. Protects formylmethionyl-tRNA from spontaneous hydrolysis and promotes its binding to the 30S ribosomal subunits. Also involved in the hydrolysis of GTP during the formation of the 70S ribosomal complex.</text>
</comment>
<comment type="subcellular location">
    <subcellularLocation>
        <location evidence="2">Cytoplasm</location>
    </subcellularLocation>
</comment>
<comment type="similarity">
    <text evidence="2">Belongs to the TRAFAC class translation factor GTPase superfamily. Classic translation factor GTPase family. IF-2 subfamily.</text>
</comment>
<proteinExistence type="inferred from homology"/>
<evidence type="ECO:0000250" key="1"/>
<evidence type="ECO:0000255" key="2">
    <source>
        <dbReference type="HAMAP-Rule" id="MF_00100"/>
    </source>
</evidence>
<evidence type="ECO:0000256" key="3">
    <source>
        <dbReference type="SAM" id="MobiDB-lite"/>
    </source>
</evidence>
<gene>
    <name evidence="2" type="primary">infB</name>
    <name type="ordered locus">glr2652</name>
</gene>
<feature type="chain" id="PRO_0000137205" description="Translation initiation factor IF-2">
    <location>
        <begin position="1"/>
        <end position="925"/>
    </location>
</feature>
<feature type="domain" description="tr-type G">
    <location>
        <begin position="417"/>
        <end position="589"/>
    </location>
</feature>
<feature type="region of interest" description="Disordered" evidence="3">
    <location>
        <begin position="190"/>
        <end position="329"/>
    </location>
</feature>
<feature type="region of interest" description="G1" evidence="1">
    <location>
        <begin position="426"/>
        <end position="433"/>
    </location>
</feature>
<feature type="region of interest" description="G2" evidence="1">
    <location>
        <begin position="451"/>
        <end position="455"/>
    </location>
</feature>
<feature type="region of interest" description="G3" evidence="1">
    <location>
        <begin position="476"/>
        <end position="479"/>
    </location>
</feature>
<feature type="region of interest" description="G4" evidence="1">
    <location>
        <begin position="530"/>
        <end position="533"/>
    </location>
</feature>
<feature type="region of interest" description="G5" evidence="1">
    <location>
        <begin position="566"/>
        <end position="568"/>
    </location>
</feature>
<feature type="compositionally biased region" description="Pro residues" evidence="3">
    <location>
        <begin position="199"/>
        <end position="209"/>
    </location>
</feature>
<feature type="compositionally biased region" description="Pro residues" evidence="3">
    <location>
        <begin position="217"/>
        <end position="238"/>
    </location>
</feature>
<feature type="compositionally biased region" description="Pro residues" evidence="3">
    <location>
        <begin position="279"/>
        <end position="288"/>
    </location>
</feature>
<feature type="compositionally biased region" description="Low complexity" evidence="3">
    <location>
        <begin position="289"/>
        <end position="307"/>
    </location>
</feature>
<feature type="compositionally biased region" description="Basic and acidic residues" evidence="3">
    <location>
        <begin position="320"/>
        <end position="329"/>
    </location>
</feature>
<feature type="binding site" evidence="2">
    <location>
        <begin position="426"/>
        <end position="433"/>
    </location>
    <ligand>
        <name>GTP</name>
        <dbReference type="ChEBI" id="CHEBI:37565"/>
    </ligand>
</feature>
<feature type="binding site" evidence="2">
    <location>
        <begin position="476"/>
        <end position="480"/>
    </location>
    <ligand>
        <name>GTP</name>
        <dbReference type="ChEBI" id="CHEBI:37565"/>
    </ligand>
</feature>
<feature type="binding site" evidence="2">
    <location>
        <begin position="530"/>
        <end position="533"/>
    </location>
    <ligand>
        <name>GTP</name>
        <dbReference type="ChEBI" id="CHEBI:37565"/>
    </ligand>
</feature>
<dbReference type="EMBL" id="BA000045">
    <property type="protein sequence ID" value="BAC90593.1"/>
    <property type="molecule type" value="Genomic_DNA"/>
</dbReference>
<dbReference type="RefSeq" id="NP_925598.1">
    <property type="nucleotide sequence ID" value="NC_005125.1"/>
</dbReference>
<dbReference type="RefSeq" id="WP_011142646.1">
    <property type="nucleotide sequence ID" value="NC_005125.1"/>
</dbReference>
<dbReference type="SMR" id="Q7NH85"/>
<dbReference type="FunCoup" id="Q7NH85">
    <property type="interactions" value="349"/>
</dbReference>
<dbReference type="STRING" id="251221.gene:10760153"/>
<dbReference type="EnsemblBacteria" id="BAC90593">
    <property type="protein sequence ID" value="BAC90593"/>
    <property type="gene ID" value="BAC90593"/>
</dbReference>
<dbReference type="KEGG" id="gvi:glr2652"/>
<dbReference type="PATRIC" id="fig|251221.4.peg.2689"/>
<dbReference type="eggNOG" id="COG0532">
    <property type="taxonomic scope" value="Bacteria"/>
</dbReference>
<dbReference type="HOGENOM" id="CLU_006301_7_0_3"/>
<dbReference type="InParanoid" id="Q7NH85"/>
<dbReference type="OrthoDB" id="9811804at2"/>
<dbReference type="PhylomeDB" id="Q7NH85"/>
<dbReference type="Proteomes" id="UP000000557">
    <property type="component" value="Chromosome"/>
</dbReference>
<dbReference type="GO" id="GO:0005737">
    <property type="term" value="C:cytoplasm"/>
    <property type="evidence" value="ECO:0000318"/>
    <property type="project" value="GO_Central"/>
</dbReference>
<dbReference type="GO" id="GO:0005829">
    <property type="term" value="C:cytosol"/>
    <property type="evidence" value="ECO:0000318"/>
    <property type="project" value="GO_Central"/>
</dbReference>
<dbReference type="GO" id="GO:0005525">
    <property type="term" value="F:GTP binding"/>
    <property type="evidence" value="ECO:0007669"/>
    <property type="project" value="UniProtKB-KW"/>
</dbReference>
<dbReference type="GO" id="GO:0003924">
    <property type="term" value="F:GTPase activity"/>
    <property type="evidence" value="ECO:0007669"/>
    <property type="project" value="UniProtKB-UniRule"/>
</dbReference>
<dbReference type="GO" id="GO:0003743">
    <property type="term" value="F:translation initiation factor activity"/>
    <property type="evidence" value="ECO:0000318"/>
    <property type="project" value="GO_Central"/>
</dbReference>
<dbReference type="GO" id="GO:0006413">
    <property type="term" value="P:translational initiation"/>
    <property type="evidence" value="ECO:0000318"/>
    <property type="project" value="GO_Central"/>
</dbReference>
<dbReference type="CDD" id="cd01887">
    <property type="entry name" value="IF2_eIF5B"/>
    <property type="match status" value="1"/>
</dbReference>
<dbReference type="CDD" id="cd03702">
    <property type="entry name" value="IF2_mtIF2_II"/>
    <property type="match status" value="1"/>
</dbReference>
<dbReference type="CDD" id="cd03692">
    <property type="entry name" value="mtIF2_IVc"/>
    <property type="match status" value="1"/>
</dbReference>
<dbReference type="FunFam" id="1.10.10.2480:FF:000003">
    <property type="entry name" value="Translation initiation factor IF-2"/>
    <property type="match status" value="1"/>
</dbReference>
<dbReference type="FunFam" id="2.40.30.10:FF:000007">
    <property type="entry name" value="Translation initiation factor IF-2"/>
    <property type="match status" value="1"/>
</dbReference>
<dbReference type="FunFam" id="2.40.30.10:FF:000008">
    <property type="entry name" value="Translation initiation factor IF-2"/>
    <property type="match status" value="1"/>
</dbReference>
<dbReference type="FunFam" id="3.40.50.10050:FF:000001">
    <property type="entry name" value="Translation initiation factor IF-2"/>
    <property type="match status" value="1"/>
</dbReference>
<dbReference type="FunFam" id="3.40.50.300:FF:000019">
    <property type="entry name" value="Translation initiation factor IF-2"/>
    <property type="match status" value="1"/>
</dbReference>
<dbReference type="Gene3D" id="1.10.10.2480">
    <property type="match status" value="1"/>
</dbReference>
<dbReference type="Gene3D" id="3.40.50.300">
    <property type="entry name" value="P-loop containing nucleotide triphosphate hydrolases"/>
    <property type="match status" value="1"/>
</dbReference>
<dbReference type="Gene3D" id="2.40.30.10">
    <property type="entry name" value="Translation factors"/>
    <property type="match status" value="2"/>
</dbReference>
<dbReference type="Gene3D" id="3.40.50.10050">
    <property type="entry name" value="Translation initiation factor IF- 2, domain 3"/>
    <property type="match status" value="1"/>
</dbReference>
<dbReference type="HAMAP" id="MF_00100_B">
    <property type="entry name" value="IF_2_B"/>
    <property type="match status" value="1"/>
</dbReference>
<dbReference type="InterPro" id="IPR053905">
    <property type="entry name" value="EF-G-like_DII"/>
</dbReference>
<dbReference type="InterPro" id="IPR044145">
    <property type="entry name" value="IF2_II"/>
</dbReference>
<dbReference type="InterPro" id="IPR006847">
    <property type="entry name" value="IF2_N"/>
</dbReference>
<dbReference type="InterPro" id="IPR027417">
    <property type="entry name" value="P-loop_NTPase"/>
</dbReference>
<dbReference type="InterPro" id="IPR005225">
    <property type="entry name" value="Small_GTP-bd"/>
</dbReference>
<dbReference type="InterPro" id="IPR000795">
    <property type="entry name" value="T_Tr_GTP-bd_dom"/>
</dbReference>
<dbReference type="InterPro" id="IPR000178">
    <property type="entry name" value="TF_IF2_bacterial-like"/>
</dbReference>
<dbReference type="InterPro" id="IPR015760">
    <property type="entry name" value="TIF_IF2"/>
</dbReference>
<dbReference type="InterPro" id="IPR023115">
    <property type="entry name" value="TIF_IF2_dom3"/>
</dbReference>
<dbReference type="InterPro" id="IPR036925">
    <property type="entry name" value="TIF_IF2_dom3_sf"/>
</dbReference>
<dbReference type="InterPro" id="IPR009000">
    <property type="entry name" value="Transl_B-barrel_sf"/>
</dbReference>
<dbReference type="NCBIfam" id="TIGR00487">
    <property type="entry name" value="IF-2"/>
    <property type="match status" value="1"/>
</dbReference>
<dbReference type="NCBIfam" id="TIGR00231">
    <property type="entry name" value="small_GTP"/>
    <property type="match status" value="1"/>
</dbReference>
<dbReference type="PANTHER" id="PTHR43381:SF5">
    <property type="entry name" value="TR-TYPE G DOMAIN-CONTAINING PROTEIN"/>
    <property type="match status" value="1"/>
</dbReference>
<dbReference type="PANTHER" id="PTHR43381">
    <property type="entry name" value="TRANSLATION INITIATION FACTOR IF-2-RELATED"/>
    <property type="match status" value="1"/>
</dbReference>
<dbReference type="Pfam" id="PF22042">
    <property type="entry name" value="EF-G_D2"/>
    <property type="match status" value="1"/>
</dbReference>
<dbReference type="Pfam" id="PF00009">
    <property type="entry name" value="GTP_EFTU"/>
    <property type="match status" value="1"/>
</dbReference>
<dbReference type="Pfam" id="PF11987">
    <property type="entry name" value="IF-2"/>
    <property type="match status" value="1"/>
</dbReference>
<dbReference type="Pfam" id="PF04760">
    <property type="entry name" value="IF2_N"/>
    <property type="match status" value="2"/>
</dbReference>
<dbReference type="PRINTS" id="PR00315">
    <property type="entry name" value="ELONGATNFCT"/>
</dbReference>
<dbReference type="SUPFAM" id="SSF52156">
    <property type="entry name" value="Initiation factor IF2/eIF5b, domain 3"/>
    <property type="match status" value="1"/>
</dbReference>
<dbReference type="SUPFAM" id="SSF52540">
    <property type="entry name" value="P-loop containing nucleoside triphosphate hydrolases"/>
    <property type="match status" value="1"/>
</dbReference>
<dbReference type="SUPFAM" id="SSF50447">
    <property type="entry name" value="Translation proteins"/>
    <property type="match status" value="2"/>
</dbReference>
<dbReference type="PROSITE" id="PS51722">
    <property type="entry name" value="G_TR_2"/>
    <property type="match status" value="1"/>
</dbReference>
<dbReference type="PROSITE" id="PS01176">
    <property type="entry name" value="IF2"/>
    <property type="match status" value="1"/>
</dbReference>
<keyword id="KW-0963">Cytoplasm</keyword>
<keyword id="KW-0342">GTP-binding</keyword>
<keyword id="KW-0396">Initiation factor</keyword>
<keyword id="KW-0547">Nucleotide-binding</keyword>
<keyword id="KW-0648">Protein biosynthesis</keyword>
<keyword id="KW-1185">Reference proteome</keyword>
<reference key="1">
    <citation type="journal article" date="2003" name="DNA Res.">
        <title>Complete genome structure of Gloeobacter violaceus PCC 7421, a cyanobacterium that lacks thylakoids.</title>
        <authorList>
            <person name="Nakamura Y."/>
            <person name="Kaneko T."/>
            <person name="Sato S."/>
            <person name="Mimuro M."/>
            <person name="Miyashita H."/>
            <person name="Tsuchiya T."/>
            <person name="Sasamoto S."/>
            <person name="Watanabe A."/>
            <person name="Kawashima K."/>
            <person name="Kishida Y."/>
            <person name="Kiyokawa C."/>
            <person name="Kohara M."/>
            <person name="Matsumoto M."/>
            <person name="Matsuno A."/>
            <person name="Nakazaki N."/>
            <person name="Shimpo S."/>
            <person name="Takeuchi C."/>
            <person name="Yamada M."/>
            <person name="Tabata S."/>
        </authorList>
    </citation>
    <scope>NUCLEOTIDE SEQUENCE [LARGE SCALE GENOMIC DNA]</scope>
    <source>
        <strain>ATCC 29082 / PCC 7421</strain>
    </source>
</reference>
<accession>Q7NH85</accession>